<sequence length="466" mass="51859">MATVDTILQGKYPAKAHARRVAEYLQAQCPGNPGVIYLESQKTRMIEDNDETMPFRQRRPFFYLSGCLLPEASLVYDVSADKLTLFIPAIDPEDVIWSGLPLSPSEAMELYDVDNVLTTPEVNATLASIASAHNGKAVAYAIQGRTSPETKFEGFQDANFTLLNGWIEQARVVKDAYEIALLRKANDISTKAHIAAIKAAKTATNEREIEGAFIATCIANGAREQSYHPIVACGENGATLHYPKNDAELTDPVTKQRKKNVLIDAGGEYRTYCADITRVIPLGGRFAQETRQIYQIVLQMQLECIAMLKDGVLWDDVHAHAHRVAIKGLLQLGILRGSEDELFEKRVSVAFFPHGLGHYLGMDTHDTGGNPNYGDKDKMFRYLRVRGHLPAGSVITVEPGIYFCRFIIEPYIKSPETSKYIDTDVLERYWSVGGVRIEDNVHVTKDGYENLTTAPKIMEEVESLAL</sequence>
<proteinExistence type="inferred from homology"/>
<protein>
    <recommendedName>
        <fullName>Probable Xaa-Pro aminopeptidase pepP</fullName>
        <ecNumber>3.4.11.9</ecNumber>
    </recommendedName>
    <alternativeName>
        <fullName>Aminoacylproline aminopeptidase</fullName>
    </alternativeName>
    <alternativeName>
        <fullName>Prolidase</fullName>
    </alternativeName>
</protein>
<keyword id="KW-0031">Aminopeptidase</keyword>
<keyword id="KW-0378">Hydrolase</keyword>
<keyword id="KW-0464">Manganese</keyword>
<keyword id="KW-0479">Metal-binding</keyword>
<keyword id="KW-0482">Metalloprotease</keyword>
<keyword id="KW-0645">Protease</keyword>
<keyword id="KW-1185">Reference proteome</keyword>
<organism>
    <name type="scientific">Aspergillus terreus (strain NIH 2624 / FGSC A1156)</name>
    <dbReference type="NCBI Taxonomy" id="341663"/>
    <lineage>
        <taxon>Eukaryota</taxon>
        <taxon>Fungi</taxon>
        <taxon>Dikarya</taxon>
        <taxon>Ascomycota</taxon>
        <taxon>Pezizomycotina</taxon>
        <taxon>Eurotiomycetes</taxon>
        <taxon>Eurotiomycetidae</taxon>
        <taxon>Eurotiales</taxon>
        <taxon>Aspergillaceae</taxon>
        <taxon>Aspergillus</taxon>
        <taxon>Aspergillus subgen. Circumdati</taxon>
    </lineage>
</organism>
<reference key="1">
    <citation type="submission" date="2005-09" db="EMBL/GenBank/DDBJ databases">
        <title>Annotation of the Aspergillus terreus NIH2624 genome.</title>
        <authorList>
            <person name="Birren B.W."/>
            <person name="Lander E.S."/>
            <person name="Galagan J.E."/>
            <person name="Nusbaum C."/>
            <person name="Devon K."/>
            <person name="Henn M."/>
            <person name="Ma L.-J."/>
            <person name="Jaffe D.B."/>
            <person name="Butler J."/>
            <person name="Alvarez P."/>
            <person name="Gnerre S."/>
            <person name="Grabherr M."/>
            <person name="Kleber M."/>
            <person name="Mauceli E.W."/>
            <person name="Brockman W."/>
            <person name="Rounsley S."/>
            <person name="Young S.K."/>
            <person name="LaButti K."/>
            <person name="Pushparaj V."/>
            <person name="DeCaprio D."/>
            <person name="Crawford M."/>
            <person name="Koehrsen M."/>
            <person name="Engels R."/>
            <person name="Montgomery P."/>
            <person name="Pearson M."/>
            <person name="Howarth C."/>
            <person name="Larson L."/>
            <person name="Luoma S."/>
            <person name="White J."/>
            <person name="Alvarado L."/>
            <person name="Kodira C.D."/>
            <person name="Zeng Q."/>
            <person name="Oleary S."/>
            <person name="Yandava C."/>
            <person name="Denning D.W."/>
            <person name="Nierman W.C."/>
            <person name="Milne T."/>
            <person name="Madden K."/>
        </authorList>
    </citation>
    <scope>NUCLEOTIDE SEQUENCE [LARGE SCALE GENOMIC DNA]</scope>
    <source>
        <strain>NIH 2624 / FGSC A1156</strain>
    </source>
</reference>
<feature type="chain" id="PRO_0000411867" description="Probable Xaa-Pro aminopeptidase pepP">
    <location>
        <begin position="1"/>
        <end position="466"/>
    </location>
</feature>
<feature type="binding site" evidence="1">
    <location>
        <position position="264"/>
    </location>
    <ligand>
        <name>Mn(2+)</name>
        <dbReference type="ChEBI" id="CHEBI:29035"/>
        <label>2</label>
    </ligand>
</feature>
<feature type="binding site" evidence="1">
    <location>
        <position position="275"/>
    </location>
    <ligand>
        <name>Mn(2+)</name>
        <dbReference type="ChEBI" id="CHEBI:29035"/>
        <label>1</label>
    </ligand>
</feature>
<feature type="binding site" evidence="1">
    <location>
        <position position="275"/>
    </location>
    <ligand>
        <name>Mn(2+)</name>
        <dbReference type="ChEBI" id="CHEBI:29035"/>
        <label>2</label>
    </ligand>
</feature>
<feature type="binding site" evidence="1">
    <location>
        <position position="398"/>
    </location>
    <ligand>
        <name>Mn(2+)</name>
        <dbReference type="ChEBI" id="CHEBI:29035"/>
        <label>1</label>
    </ligand>
</feature>
<feature type="binding site" evidence="1">
    <location>
        <position position="438"/>
    </location>
    <ligand>
        <name>Mn(2+)</name>
        <dbReference type="ChEBI" id="CHEBI:29035"/>
        <label>1</label>
    </ligand>
</feature>
<feature type="binding site" evidence="1">
    <location>
        <position position="438"/>
    </location>
    <ligand>
        <name>Mn(2+)</name>
        <dbReference type="ChEBI" id="CHEBI:29035"/>
        <label>2</label>
    </ligand>
</feature>
<evidence type="ECO:0000250" key="1"/>
<evidence type="ECO:0000305" key="2"/>
<comment type="function">
    <text evidence="1">Catalyzes the removal of a penultimate prolyl residue from the N-termini of peptides.</text>
</comment>
<comment type="catalytic activity">
    <reaction>
        <text>Release of any N-terminal amino acid, including proline, that is linked to proline, even from a dipeptide or tripeptide.</text>
        <dbReference type="EC" id="3.4.11.9"/>
    </reaction>
</comment>
<comment type="cofactor">
    <cofactor evidence="1">
        <name>Mn(2+)</name>
        <dbReference type="ChEBI" id="CHEBI:29035"/>
    </cofactor>
    <text evidence="1">Binds 2 manganese ions per subunit.</text>
</comment>
<comment type="similarity">
    <text evidence="2">Belongs to the peptidase M24B family.</text>
</comment>
<name>AMPP3_ASPTN</name>
<gene>
    <name type="primary">pepP</name>
    <name type="ORF">ATEG_06859</name>
</gene>
<dbReference type="EC" id="3.4.11.9"/>
<dbReference type="EMBL" id="CH476603">
    <property type="protein sequence ID" value="EAU32243.1"/>
    <property type="molecule type" value="Genomic_DNA"/>
</dbReference>
<dbReference type="RefSeq" id="XP_001209544.1">
    <property type="nucleotide sequence ID" value="XM_001209544.1"/>
</dbReference>
<dbReference type="SMR" id="Q0CFZ0"/>
<dbReference type="STRING" id="341663.Q0CFZ0"/>
<dbReference type="EnsemblFungi" id="EAU32243">
    <property type="protein sequence ID" value="EAU32243"/>
    <property type="gene ID" value="ATEG_06859"/>
</dbReference>
<dbReference type="GeneID" id="4318863"/>
<dbReference type="VEuPathDB" id="FungiDB:ATEG_06859"/>
<dbReference type="eggNOG" id="KOG2737">
    <property type="taxonomic scope" value="Eukaryota"/>
</dbReference>
<dbReference type="HOGENOM" id="CLU_017266_1_2_1"/>
<dbReference type="OMA" id="DAHALFF"/>
<dbReference type="OrthoDB" id="10261878at2759"/>
<dbReference type="Proteomes" id="UP000007963">
    <property type="component" value="Unassembled WGS sequence"/>
</dbReference>
<dbReference type="GO" id="GO:0030145">
    <property type="term" value="F:manganese ion binding"/>
    <property type="evidence" value="ECO:0007669"/>
    <property type="project" value="InterPro"/>
</dbReference>
<dbReference type="GO" id="GO:0070006">
    <property type="term" value="F:metalloaminopeptidase activity"/>
    <property type="evidence" value="ECO:0007669"/>
    <property type="project" value="InterPro"/>
</dbReference>
<dbReference type="GO" id="GO:0006508">
    <property type="term" value="P:proteolysis"/>
    <property type="evidence" value="ECO:0007669"/>
    <property type="project" value="UniProtKB-KW"/>
</dbReference>
<dbReference type="CDD" id="cd01087">
    <property type="entry name" value="Prolidase"/>
    <property type="match status" value="1"/>
</dbReference>
<dbReference type="FunFam" id="3.90.230.10:FF:000002">
    <property type="entry name" value="Xaa-Pro aminopeptidase 3"/>
    <property type="match status" value="1"/>
</dbReference>
<dbReference type="Gene3D" id="3.90.230.10">
    <property type="entry name" value="Creatinase/methionine aminopeptidase superfamily"/>
    <property type="match status" value="1"/>
</dbReference>
<dbReference type="Gene3D" id="3.40.350.10">
    <property type="entry name" value="Creatinase/prolidase N-terminal domain"/>
    <property type="match status" value="1"/>
</dbReference>
<dbReference type="InterPro" id="IPR007865">
    <property type="entry name" value="Aminopep_P_N"/>
</dbReference>
<dbReference type="InterPro" id="IPR029149">
    <property type="entry name" value="Creatin/AminoP/Spt16_N"/>
</dbReference>
<dbReference type="InterPro" id="IPR036005">
    <property type="entry name" value="Creatinase/aminopeptidase-like"/>
</dbReference>
<dbReference type="InterPro" id="IPR000994">
    <property type="entry name" value="Pept_M24"/>
</dbReference>
<dbReference type="InterPro" id="IPR052433">
    <property type="entry name" value="X-Pro_dipept-like"/>
</dbReference>
<dbReference type="PANTHER" id="PTHR43226">
    <property type="entry name" value="XAA-PRO AMINOPEPTIDASE 3"/>
    <property type="match status" value="1"/>
</dbReference>
<dbReference type="PANTHER" id="PTHR43226:SF1">
    <property type="entry name" value="XAA-PRO DIPEPTIDASE"/>
    <property type="match status" value="1"/>
</dbReference>
<dbReference type="Pfam" id="PF05195">
    <property type="entry name" value="AMP_N"/>
    <property type="match status" value="1"/>
</dbReference>
<dbReference type="Pfam" id="PF00557">
    <property type="entry name" value="Peptidase_M24"/>
    <property type="match status" value="1"/>
</dbReference>
<dbReference type="SMART" id="SM01011">
    <property type="entry name" value="AMP_N"/>
    <property type="match status" value="1"/>
</dbReference>
<dbReference type="SUPFAM" id="SSF55920">
    <property type="entry name" value="Creatinase/aminopeptidase"/>
    <property type="match status" value="1"/>
</dbReference>
<dbReference type="SUPFAM" id="SSF53092">
    <property type="entry name" value="Creatinase/prolidase N-terminal domain"/>
    <property type="match status" value="1"/>
</dbReference>
<accession>Q0CFZ0</accession>